<protein>
    <recommendedName>
        <fullName>Kelch repeat-containing protein 2</fullName>
    </recommendedName>
</protein>
<keyword id="KW-0175">Coiled coil</keyword>
<keyword id="KW-0880">Kelch repeat</keyword>
<keyword id="KW-0597">Phosphoprotein</keyword>
<keyword id="KW-1185">Reference proteome</keyword>
<keyword id="KW-0677">Repeat</keyword>
<sequence>MVPFKLTNKVPTDTGPSLISAQSVPRPIVFMDNRNNTRIVTPTLPPNQHRGISGASTALPWSPESKNTGKYIWNRVKLKNSPFPRYRHSSSFIVTNDNRIFVTGGLHDQSVYGDVWQIAANADGTSFTSKRIDIDQNTPPPRVGHASTICGNAYVVFGGDTHKLNKNGLLDDDLYLFNINSYKWTIPQPIGRRPLGRYGHKISIIASNPMQTKLYLFGGQVDETYFNDLVVFDLSSFRRPNSHWEFLEPVGDLPPPLTNHTMVAYDNKLWVFGGETPKTISNDTYRYDPAQSEWSKVKTTGEKPPPIQEHASVVYKHLMCVLGGKDTHNAYSNDVYFLNLLSLKWYKLPRMKEGIPQERSGHSLTLMKNEKLLIMGGDKTDYASPNIHDLQTSETDQGEGTLLYTLDLSSLNELCPGIMCESLHAGESFSNSLSGGFTPSKSTESENQEIINILTPRLPDSKVLSYNDIDEGAGSYSSALDDKAFERKSDREEKKPQSSKVDSSINKESPGTGIKVSKKNFPVLRGLTVDSEEYGSSSYKDTSCQKGIPKNLFDDLNLNLQTLRLEAQQKELETARHISQLEKEVQRLMVIKEASKDSNFQTARLKNLEIQKTFLESRINDLKNLLMVKLSQASKLCDQITIQNNGLKTCSEHVTIKRDIIDLENKCDVLKRQNEILVNNMQKITPELHTYLNESSCYLGKLLKSYPTSARPPSSEKDNQIYEKDSLNKIEKVINEMHETVRAKEKLHLETQKLNDERDSLRANLLDNNNKLDALRKLSDGSSKSMDLTKKAIHLSQSELEKYRKNNDDLQKEIDRIKTEQAEQDDKQEQRGAITHGNFDAFHRMKINNLKAELYMSKENRDSLKDELLALKKKLYTLEQKK</sequence>
<accession>P50090</accession>
<accession>D6VV18</accession>
<organism>
    <name type="scientific">Saccharomyces cerevisiae (strain ATCC 204508 / S288c)</name>
    <name type="common">Baker's yeast</name>
    <dbReference type="NCBI Taxonomy" id="559292"/>
    <lineage>
        <taxon>Eukaryota</taxon>
        <taxon>Fungi</taxon>
        <taxon>Dikarya</taxon>
        <taxon>Ascomycota</taxon>
        <taxon>Saccharomycotina</taxon>
        <taxon>Saccharomycetes</taxon>
        <taxon>Saccharomycetales</taxon>
        <taxon>Saccharomycetaceae</taxon>
        <taxon>Saccharomyces</taxon>
    </lineage>
</organism>
<gene>
    <name type="primary">KEL2</name>
    <name type="ordered locus">YGR238C</name>
    <name type="ORF">G8585</name>
</gene>
<evidence type="ECO:0000255" key="1"/>
<evidence type="ECO:0000256" key="2">
    <source>
        <dbReference type="SAM" id="MobiDB-lite"/>
    </source>
</evidence>
<evidence type="ECO:0000269" key="3">
    <source>
    </source>
</evidence>
<evidence type="ECO:0007744" key="4">
    <source>
    </source>
</evidence>
<name>KEL2_YEAST</name>
<dbReference type="EMBL" id="X87941">
    <property type="protein sequence ID" value="CAA61189.1"/>
    <property type="molecule type" value="Genomic_DNA"/>
</dbReference>
<dbReference type="EMBL" id="Z73023">
    <property type="protein sequence ID" value="CAA97266.1"/>
    <property type="molecule type" value="Genomic_DNA"/>
</dbReference>
<dbReference type="EMBL" id="AY693035">
    <property type="protein sequence ID" value="AAT93054.1"/>
    <property type="molecule type" value="Genomic_DNA"/>
</dbReference>
<dbReference type="EMBL" id="BK006941">
    <property type="protein sequence ID" value="DAA08329.1"/>
    <property type="molecule type" value="Genomic_DNA"/>
</dbReference>
<dbReference type="PIR" id="S57704">
    <property type="entry name" value="S57704"/>
</dbReference>
<dbReference type="RefSeq" id="NP_011754.3">
    <property type="nucleotide sequence ID" value="NM_001181367.3"/>
</dbReference>
<dbReference type="SMR" id="P50090"/>
<dbReference type="BioGRID" id="33490">
    <property type="interactions" value="165"/>
</dbReference>
<dbReference type="ComplexPortal" id="CPX-36">
    <property type="entry name" value="Kelch-containing Formin Regulatory Complex"/>
</dbReference>
<dbReference type="DIP" id="DIP-4229N"/>
<dbReference type="FunCoup" id="P50090">
    <property type="interactions" value="533"/>
</dbReference>
<dbReference type="IntAct" id="P50090">
    <property type="interactions" value="11"/>
</dbReference>
<dbReference type="MINT" id="P50090"/>
<dbReference type="STRING" id="4932.YGR238C"/>
<dbReference type="iPTMnet" id="P50090"/>
<dbReference type="PaxDb" id="4932-YGR238C"/>
<dbReference type="PeptideAtlas" id="P50090"/>
<dbReference type="EnsemblFungi" id="YGR238C_mRNA">
    <property type="protein sequence ID" value="YGR238C"/>
    <property type="gene ID" value="YGR238C"/>
</dbReference>
<dbReference type="GeneID" id="853153"/>
<dbReference type="KEGG" id="sce:YGR238C"/>
<dbReference type="AGR" id="SGD:S000003470"/>
<dbReference type="SGD" id="S000003470">
    <property type="gene designation" value="KEL2"/>
</dbReference>
<dbReference type="VEuPathDB" id="FungiDB:YGR238C"/>
<dbReference type="eggNOG" id="KOG0379">
    <property type="taxonomic scope" value="Eukaryota"/>
</dbReference>
<dbReference type="GeneTree" id="ENSGT00940000176597"/>
<dbReference type="HOGENOM" id="CLU_005472_0_0_1"/>
<dbReference type="InParanoid" id="P50090"/>
<dbReference type="OrthoDB" id="45365at2759"/>
<dbReference type="BioCyc" id="YEAST:G3O-30916-MONOMER"/>
<dbReference type="BioGRID-ORCS" id="853153">
    <property type="hits" value="1 hit in 10 CRISPR screens"/>
</dbReference>
<dbReference type="PRO" id="PR:P50090"/>
<dbReference type="Proteomes" id="UP000002311">
    <property type="component" value="Chromosome VII"/>
</dbReference>
<dbReference type="RNAct" id="P50090">
    <property type="molecule type" value="protein"/>
</dbReference>
<dbReference type="GO" id="GO:0051285">
    <property type="term" value="C:cell cortex of cell tip"/>
    <property type="evidence" value="ECO:0000318"/>
    <property type="project" value="GO_Central"/>
</dbReference>
<dbReference type="GO" id="GO:0005935">
    <property type="term" value="C:cellular bud neck"/>
    <property type="evidence" value="ECO:0000314"/>
    <property type="project" value="SGD"/>
</dbReference>
<dbReference type="GO" id="GO:0005934">
    <property type="term" value="C:cellular bud tip"/>
    <property type="evidence" value="ECO:0000314"/>
    <property type="project" value="SGD"/>
</dbReference>
<dbReference type="GO" id="GO:1990615">
    <property type="term" value="C:Kelch-containing formin regulatory complex"/>
    <property type="evidence" value="ECO:0000314"/>
    <property type="project" value="SGD"/>
</dbReference>
<dbReference type="GO" id="GO:0043332">
    <property type="term" value="C:mating projection tip"/>
    <property type="evidence" value="ECO:0000314"/>
    <property type="project" value="SGD"/>
</dbReference>
<dbReference type="GO" id="GO:0000747">
    <property type="term" value="P:conjugation with cellular fusion"/>
    <property type="evidence" value="ECO:0000315"/>
    <property type="project" value="SGD"/>
</dbReference>
<dbReference type="GO" id="GO:0061245">
    <property type="term" value="P:establishment or maintenance of bipolar cell polarity"/>
    <property type="evidence" value="ECO:0000318"/>
    <property type="project" value="GO_Central"/>
</dbReference>
<dbReference type="GO" id="GO:0001100">
    <property type="term" value="P:negative regulation of exit from mitosis"/>
    <property type="evidence" value="ECO:0000315"/>
    <property type="project" value="SGD"/>
</dbReference>
<dbReference type="GO" id="GO:0032465">
    <property type="term" value="P:regulation of cytokinesis"/>
    <property type="evidence" value="ECO:0000316"/>
    <property type="project" value="SGD"/>
</dbReference>
<dbReference type="GO" id="GO:0090337">
    <property type="term" value="P:regulation of formin-nucleated actin cable assembly"/>
    <property type="evidence" value="ECO:0000316"/>
    <property type="project" value="SGD"/>
</dbReference>
<dbReference type="GO" id="GO:0060627">
    <property type="term" value="P:regulation of vesicle-mediated transport"/>
    <property type="evidence" value="ECO:0000315"/>
    <property type="project" value="SGD"/>
</dbReference>
<dbReference type="FunFam" id="2.120.10.80:FF:000151">
    <property type="entry name" value="Kelch repeat-containing protein 2"/>
    <property type="match status" value="1"/>
</dbReference>
<dbReference type="Gene3D" id="2.120.10.80">
    <property type="entry name" value="Kelch-type beta propeller"/>
    <property type="match status" value="2"/>
</dbReference>
<dbReference type="InterPro" id="IPR015915">
    <property type="entry name" value="Kelch-typ_b-propeller"/>
</dbReference>
<dbReference type="PANTHER" id="PTHR46093">
    <property type="entry name" value="ACYL-COA-BINDING DOMAIN-CONTAINING PROTEIN 5"/>
    <property type="match status" value="1"/>
</dbReference>
<dbReference type="PANTHER" id="PTHR46093:SF18">
    <property type="entry name" value="FIBRONECTIN TYPE-III DOMAIN-CONTAINING PROTEIN"/>
    <property type="match status" value="1"/>
</dbReference>
<dbReference type="Pfam" id="PF24681">
    <property type="entry name" value="Kelch_KLHDC2_KLHL20_DRC7"/>
    <property type="match status" value="1"/>
</dbReference>
<dbReference type="SUPFAM" id="SSF117281">
    <property type="entry name" value="Kelch motif"/>
    <property type="match status" value="2"/>
</dbReference>
<reference key="1">
    <citation type="journal article" date="1996" name="Yeast">
        <title>Sequence analysis of the 43 kb CRM1-YLM9-PET54-DIE2-SMI1-PHO81-YHB4-PFK1 region from the right arm of Saccharomyces cerevisiae chromosome VII.</title>
        <authorList>
            <person name="van der Aart Q.J.M."/>
            <person name="Kleine K."/>
            <person name="Steensma H.Y."/>
        </authorList>
    </citation>
    <scope>NUCLEOTIDE SEQUENCE [GENOMIC DNA]</scope>
    <source>
        <strain>ATCC 204508 / S288c</strain>
    </source>
</reference>
<reference key="2">
    <citation type="journal article" date="1997" name="Nature">
        <title>The nucleotide sequence of Saccharomyces cerevisiae chromosome VII.</title>
        <authorList>
            <person name="Tettelin H."/>
            <person name="Agostoni-Carbone M.L."/>
            <person name="Albermann K."/>
            <person name="Albers M."/>
            <person name="Arroyo J."/>
            <person name="Backes U."/>
            <person name="Barreiros T."/>
            <person name="Bertani I."/>
            <person name="Bjourson A.J."/>
            <person name="Brueckner M."/>
            <person name="Bruschi C.V."/>
            <person name="Carignani G."/>
            <person name="Castagnoli L."/>
            <person name="Cerdan E."/>
            <person name="Clemente M.L."/>
            <person name="Coblenz A."/>
            <person name="Coglievina M."/>
            <person name="Coissac E."/>
            <person name="Defoor E."/>
            <person name="Del Bino S."/>
            <person name="Delius H."/>
            <person name="Delneri D."/>
            <person name="de Wergifosse P."/>
            <person name="Dujon B."/>
            <person name="Durand P."/>
            <person name="Entian K.-D."/>
            <person name="Eraso P."/>
            <person name="Escribano V."/>
            <person name="Fabiani L."/>
            <person name="Fartmann B."/>
            <person name="Feroli F."/>
            <person name="Feuermann M."/>
            <person name="Frontali L."/>
            <person name="Garcia-Gonzalez M."/>
            <person name="Garcia-Saez M.I."/>
            <person name="Goffeau A."/>
            <person name="Guerreiro P."/>
            <person name="Hani J."/>
            <person name="Hansen M."/>
            <person name="Hebling U."/>
            <person name="Hernandez K."/>
            <person name="Heumann K."/>
            <person name="Hilger F."/>
            <person name="Hofmann B."/>
            <person name="Indge K.J."/>
            <person name="James C.M."/>
            <person name="Klima R."/>
            <person name="Koetter P."/>
            <person name="Kramer B."/>
            <person name="Kramer W."/>
            <person name="Lauquin G."/>
            <person name="Leuther H."/>
            <person name="Louis E.J."/>
            <person name="Maillier E."/>
            <person name="Marconi A."/>
            <person name="Martegani E."/>
            <person name="Mazon M.J."/>
            <person name="Mazzoni C."/>
            <person name="McReynolds A.D.K."/>
            <person name="Melchioretto P."/>
            <person name="Mewes H.-W."/>
            <person name="Minenkova O."/>
            <person name="Mueller-Auer S."/>
            <person name="Nawrocki A."/>
            <person name="Netter P."/>
            <person name="Neu R."/>
            <person name="Nombela C."/>
            <person name="Oliver S.G."/>
            <person name="Panzeri L."/>
            <person name="Paoluzi S."/>
            <person name="Plevani P."/>
            <person name="Portetelle D."/>
            <person name="Portillo F."/>
            <person name="Potier S."/>
            <person name="Purnelle B."/>
            <person name="Rieger M."/>
            <person name="Riles L."/>
            <person name="Rinaldi T."/>
            <person name="Robben J."/>
            <person name="Rodrigues-Pousada C."/>
            <person name="Rodriguez-Belmonte E."/>
            <person name="Rodriguez-Torres A.M."/>
            <person name="Rose M."/>
            <person name="Ruzzi M."/>
            <person name="Saliola M."/>
            <person name="Sanchez-Perez M."/>
            <person name="Schaefer B."/>
            <person name="Schaefer M."/>
            <person name="Scharfe M."/>
            <person name="Schmidheini T."/>
            <person name="Schreer A."/>
            <person name="Skala J."/>
            <person name="Souciet J.-L."/>
            <person name="Steensma H.Y."/>
            <person name="Talla E."/>
            <person name="Thierry A."/>
            <person name="Vandenbol M."/>
            <person name="van der Aart Q.J.M."/>
            <person name="Van Dyck L."/>
            <person name="Vanoni M."/>
            <person name="Verhasselt P."/>
            <person name="Voet M."/>
            <person name="Volckaert G."/>
            <person name="Wambutt R."/>
            <person name="Watson M.D."/>
            <person name="Weber N."/>
            <person name="Wedler E."/>
            <person name="Wedler H."/>
            <person name="Wipfli P."/>
            <person name="Wolf K."/>
            <person name="Wright L.F."/>
            <person name="Zaccaria P."/>
            <person name="Zimmermann M."/>
            <person name="Zollner A."/>
            <person name="Kleine K."/>
        </authorList>
    </citation>
    <scope>NUCLEOTIDE SEQUENCE [LARGE SCALE GENOMIC DNA]</scope>
    <source>
        <strain>ATCC 204508 / S288c</strain>
    </source>
</reference>
<reference key="3">
    <citation type="journal article" date="2014" name="G3 (Bethesda)">
        <title>The reference genome sequence of Saccharomyces cerevisiae: Then and now.</title>
        <authorList>
            <person name="Engel S.R."/>
            <person name="Dietrich F.S."/>
            <person name="Fisk D.G."/>
            <person name="Binkley G."/>
            <person name="Balakrishnan R."/>
            <person name="Costanzo M.C."/>
            <person name="Dwight S.S."/>
            <person name="Hitz B.C."/>
            <person name="Karra K."/>
            <person name="Nash R.S."/>
            <person name="Weng S."/>
            <person name="Wong E.D."/>
            <person name="Lloyd P."/>
            <person name="Skrzypek M.S."/>
            <person name="Miyasato S.R."/>
            <person name="Simison M."/>
            <person name="Cherry J.M."/>
        </authorList>
    </citation>
    <scope>GENOME REANNOTATION</scope>
    <source>
        <strain>ATCC 204508 / S288c</strain>
    </source>
</reference>
<reference key="4">
    <citation type="journal article" date="2007" name="Genome Res.">
        <title>Approaching a complete repository of sequence-verified protein-encoding clones for Saccharomyces cerevisiae.</title>
        <authorList>
            <person name="Hu Y."/>
            <person name="Rolfs A."/>
            <person name="Bhullar B."/>
            <person name="Murthy T.V.S."/>
            <person name="Zhu C."/>
            <person name="Berger M.F."/>
            <person name="Camargo A.A."/>
            <person name="Kelley F."/>
            <person name="McCarron S."/>
            <person name="Jepson D."/>
            <person name="Richardson A."/>
            <person name="Raphael J."/>
            <person name="Moreira D."/>
            <person name="Taycher E."/>
            <person name="Zuo D."/>
            <person name="Mohr S."/>
            <person name="Kane M.F."/>
            <person name="Williamson J."/>
            <person name="Simpson A.J.G."/>
            <person name="Bulyk M.L."/>
            <person name="Harlow E."/>
            <person name="Marsischky G."/>
            <person name="Kolodner R.D."/>
            <person name="LaBaer J."/>
        </authorList>
    </citation>
    <scope>NUCLEOTIDE SEQUENCE [GENOMIC DNA]</scope>
    <source>
        <strain>ATCC 204508 / S288c</strain>
    </source>
</reference>
<reference key="5">
    <citation type="journal article" date="1998" name="J. Cell Biol.">
        <title>Identification of Kel1p, a kelch domain-containing protein involved in cell fusion and morphology in Saccharomyces cerevisiae.</title>
        <authorList>
            <person name="Philips J."/>
            <person name="Herskowitz I."/>
        </authorList>
    </citation>
    <scope>CHARACTERIZATION</scope>
</reference>
<reference key="6">
    <citation type="journal article" date="2003" name="Nature">
        <title>Global analysis of protein expression in yeast.</title>
        <authorList>
            <person name="Ghaemmaghami S."/>
            <person name="Huh W.-K."/>
            <person name="Bower K."/>
            <person name="Howson R.W."/>
            <person name="Belle A."/>
            <person name="Dephoure N."/>
            <person name="O'Shea E.K."/>
            <person name="Weissman J.S."/>
        </authorList>
    </citation>
    <scope>LEVEL OF PROTEIN EXPRESSION [LARGE SCALE ANALYSIS]</scope>
</reference>
<reference key="7">
    <citation type="journal article" date="2008" name="Mol. Cell. Proteomics">
        <title>A multidimensional chromatography technology for in-depth phosphoproteome analysis.</title>
        <authorList>
            <person name="Albuquerque C.P."/>
            <person name="Smolka M.B."/>
            <person name="Payne S.H."/>
            <person name="Bafna V."/>
            <person name="Eng J."/>
            <person name="Zhou H."/>
        </authorList>
    </citation>
    <scope>PHOSPHORYLATION [LARGE SCALE ANALYSIS] AT THR-455 AND SER-509</scope>
    <scope>IDENTIFICATION BY MASS SPECTROMETRY [LARGE SCALE ANALYSIS]</scope>
</reference>
<reference key="8">
    <citation type="journal article" date="2009" name="Science">
        <title>Global analysis of Cdk1 substrate phosphorylation sites provides insights into evolution.</title>
        <authorList>
            <person name="Holt L.J."/>
            <person name="Tuch B.B."/>
            <person name="Villen J."/>
            <person name="Johnson A.D."/>
            <person name="Gygi S.P."/>
            <person name="Morgan D.O."/>
        </authorList>
    </citation>
    <scope>IDENTIFICATION BY MASS SPECTROMETRY [LARGE SCALE ANALYSIS]</scope>
</reference>
<comment type="subunit">
    <text>Interacts with KEL1.</text>
</comment>
<comment type="interaction">
    <interactant intactId="EBI-9630">
        <id>P50090</id>
    </interactant>
    <interactant intactId="EBI-9619">
        <id>P38853</id>
        <label>KEL1</label>
    </interactant>
    <organismsDiffer>false</organismsDiffer>
    <experiments>7</experiments>
</comment>
<comment type="miscellaneous">
    <text evidence="3">Present with 468 molecules/cell in log phase SD medium.</text>
</comment>
<feature type="chain" id="PRO_0000119097" description="Kelch repeat-containing protein 2">
    <location>
        <begin position="1"/>
        <end position="882"/>
    </location>
</feature>
<feature type="repeat" description="Kelch 1">
    <location>
        <begin position="99"/>
        <end position="143"/>
    </location>
</feature>
<feature type="repeat" description="Kelch 2">
    <location>
        <begin position="153"/>
        <end position="207"/>
    </location>
</feature>
<feature type="repeat" description="Kelch 3">
    <location>
        <begin position="213"/>
        <end position="267"/>
    </location>
</feature>
<feature type="repeat" description="Kelch 4">
    <location>
        <begin position="268"/>
        <end position="317"/>
    </location>
</feature>
<feature type="repeat" description="Kelch 5">
    <location>
        <begin position="319"/>
        <end position="369"/>
    </location>
</feature>
<feature type="repeat" description="Kelch 6">
    <location>
        <begin position="371"/>
        <end position="417"/>
    </location>
</feature>
<feature type="region of interest" description="Disordered" evidence="2">
    <location>
        <begin position="41"/>
        <end position="60"/>
    </location>
</feature>
<feature type="region of interest" description="Disordered" evidence="2">
    <location>
        <begin position="480"/>
        <end position="516"/>
    </location>
</feature>
<feature type="coiled-coil region" evidence="1">
    <location>
        <begin position="550"/>
        <end position="685"/>
    </location>
</feature>
<feature type="coiled-coil region" evidence="1">
    <location>
        <begin position="728"/>
        <end position="881"/>
    </location>
</feature>
<feature type="compositionally biased region" description="Basic and acidic residues" evidence="2">
    <location>
        <begin position="480"/>
        <end position="496"/>
    </location>
</feature>
<feature type="compositionally biased region" description="Polar residues" evidence="2">
    <location>
        <begin position="498"/>
        <end position="509"/>
    </location>
</feature>
<feature type="modified residue" description="Phosphothreonine" evidence="4">
    <location>
        <position position="455"/>
    </location>
</feature>
<feature type="modified residue" description="Phosphoserine" evidence="4">
    <location>
        <position position="509"/>
    </location>
</feature>
<proteinExistence type="evidence at protein level"/>